<protein>
    <recommendedName>
        <fullName evidence="1">Ribosome maturation factor RimP</fullName>
    </recommendedName>
</protein>
<comment type="function">
    <text evidence="1">Required for maturation of 30S ribosomal subunits.</text>
</comment>
<comment type="subcellular location">
    <subcellularLocation>
        <location evidence="1">Cytoplasm</location>
    </subcellularLocation>
</comment>
<comment type="similarity">
    <text evidence="1">Belongs to the RimP family.</text>
</comment>
<reference key="1">
    <citation type="submission" date="2007-07" db="EMBL/GenBank/DDBJ databases">
        <title>Complete sequence of Fervidobacterium nodosum Rt17-B1.</title>
        <authorList>
            <consortium name="US DOE Joint Genome Institute"/>
            <person name="Copeland A."/>
            <person name="Lucas S."/>
            <person name="Lapidus A."/>
            <person name="Barry K."/>
            <person name="Glavina del Rio T."/>
            <person name="Dalin E."/>
            <person name="Tice H."/>
            <person name="Pitluck S."/>
            <person name="Saunders E."/>
            <person name="Brettin T."/>
            <person name="Bruce D."/>
            <person name="Detter J.C."/>
            <person name="Han C."/>
            <person name="Schmutz J."/>
            <person name="Larimer F."/>
            <person name="Land M."/>
            <person name="Hauser L."/>
            <person name="Kyrpides N."/>
            <person name="Mikhailova N."/>
            <person name="Nelson K."/>
            <person name="Gogarten J.P."/>
            <person name="Noll K."/>
            <person name="Richardson P."/>
        </authorList>
    </citation>
    <scope>NUCLEOTIDE SEQUENCE [LARGE SCALE GENOMIC DNA]</scope>
    <source>
        <strain>ATCC 35602 / DSM 5306 / Rt17-B1</strain>
    </source>
</reference>
<keyword id="KW-0963">Cytoplasm</keyword>
<keyword id="KW-1185">Reference proteome</keyword>
<keyword id="KW-0690">Ribosome biogenesis</keyword>
<sequence length="152" mass="17721">MSLSQKEIIERVRAIAEPIVTSMGLELFDVKYRIQAGKWVLSIIIDKLDDYVSTRDCELVSYEIEKVLDSHDFIPGRYYLEVSSPGLDRPLKKIEDFRRFVGKLVKVKTKKTYRGYIVDVNMETKEIILRVDNENITIKYDDVKSANLEIEL</sequence>
<proteinExistence type="inferred from homology"/>
<dbReference type="EMBL" id="CP000771">
    <property type="protein sequence ID" value="ABS60591.1"/>
    <property type="molecule type" value="Genomic_DNA"/>
</dbReference>
<dbReference type="RefSeq" id="WP_011993909.1">
    <property type="nucleotide sequence ID" value="NC_009718.1"/>
</dbReference>
<dbReference type="SMR" id="A7HL08"/>
<dbReference type="STRING" id="381764.Fnod_0736"/>
<dbReference type="KEGG" id="fno:Fnod_0736"/>
<dbReference type="eggNOG" id="COG0779">
    <property type="taxonomic scope" value="Bacteria"/>
</dbReference>
<dbReference type="HOGENOM" id="CLU_070525_2_2_0"/>
<dbReference type="OrthoDB" id="9805006at2"/>
<dbReference type="Proteomes" id="UP000002415">
    <property type="component" value="Chromosome"/>
</dbReference>
<dbReference type="GO" id="GO:0005829">
    <property type="term" value="C:cytosol"/>
    <property type="evidence" value="ECO:0007669"/>
    <property type="project" value="TreeGrafter"/>
</dbReference>
<dbReference type="GO" id="GO:0000028">
    <property type="term" value="P:ribosomal small subunit assembly"/>
    <property type="evidence" value="ECO:0007669"/>
    <property type="project" value="TreeGrafter"/>
</dbReference>
<dbReference type="GO" id="GO:0006412">
    <property type="term" value="P:translation"/>
    <property type="evidence" value="ECO:0007669"/>
    <property type="project" value="TreeGrafter"/>
</dbReference>
<dbReference type="CDD" id="cd01734">
    <property type="entry name" value="YlxS_C"/>
    <property type="match status" value="1"/>
</dbReference>
<dbReference type="FunFam" id="3.30.300.70:FF:000001">
    <property type="entry name" value="Ribosome maturation factor RimP"/>
    <property type="match status" value="1"/>
</dbReference>
<dbReference type="Gene3D" id="2.30.30.180">
    <property type="entry name" value="Ribosome maturation factor RimP, C-terminal domain"/>
    <property type="match status" value="1"/>
</dbReference>
<dbReference type="Gene3D" id="3.30.300.70">
    <property type="entry name" value="RimP-like superfamily, N-terminal"/>
    <property type="match status" value="1"/>
</dbReference>
<dbReference type="HAMAP" id="MF_01077">
    <property type="entry name" value="RimP"/>
    <property type="match status" value="1"/>
</dbReference>
<dbReference type="InterPro" id="IPR003728">
    <property type="entry name" value="Ribosome_maturation_RimP"/>
</dbReference>
<dbReference type="InterPro" id="IPR028998">
    <property type="entry name" value="RimP_C"/>
</dbReference>
<dbReference type="InterPro" id="IPR036847">
    <property type="entry name" value="RimP_C_sf"/>
</dbReference>
<dbReference type="InterPro" id="IPR028989">
    <property type="entry name" value="RimP_N"/>
</dbReference>
<dbReference type="InterPro" id="IPR035956">
    <property type="entry name" value="RimP_N_sf"/>
</dbReference>
<dbReference type="PANTHER" id="PTHR33867">
    <property type="entry name" value="RIBOSOME MATURATION FACTOR RIMP"/>
    <property type="match status" value="1"/>
</dbReference>
<dbReference type="PANTHER" id="PTHR33867:SF1">
    <property type="entry name" value="RIBOSOME MATURATION FACTOR RIMP"/>
    <property type="match status" value="1"/>
</dbReference>
<dbReference type="Pfam" id="PF17384">
    <property type="entry name" value="DUF150_C"/>
    <property type="match status" value="1"/>
</dbReference>
<dbReference type="Pfam" id="PF02576">
    <property type="entry name" value="RimP_N"/>
    <property type="match status" value="1"/>
</dbReference>
<dbReference type="SUPFAM" id="SSF74942">
    <property type="entry name" value="YhbC-like, C-terminal domain"/>
    <property type="match status" value="1"/>
</dbReference>
<dbReference type="SUPFAM" id="SSF75420">
    <property type="entry name" value="YhbC-like, N-terminal domain"/>
    <property type="match status" value="1"/>
</dbReference>
<evidence type="ECO:0000255" key="1">
    <source>
        <dbReference type="HAMAP-Rule" id="MF_01077"/>
    </source>
</evidence>
<accession>A7HL08</accession>
<name>RIMP_FERNB</name>
<feature type="chain" id="PRO_0000384668" description="Ribosome maturation factor RimP">
    <location>
        <begin position="1"/>
        <end position="152"/>
    </location>
</feature>
<gene>
    <name evidence="1" type="primary">rimP</name>
    <name type="ordered locus">Fnod_0736</name>
</gene>
<organism>
    <name type="scientific">Fervidobacterium nodosum (strain ATCC 35602 / DSM 5306 / Rt17-B1)</name>
    <dbReference type="NCBI Taxonomy" id="381764"/>
    <lineage>
        <taxon>Bacteria</taxon>
        <taxon>Thermotogati</taxon>
        <taxon>Thermotogota</taxon>
        <taxon>Thermotogae</taxon>
        <taxon>Thermotogales</taxon>
        <taxon>Fervidobacteriaceae</taxon>
        <taxon>Fervidobacterium</taxon>
    </lineage>
</organism>